<dbReference type="EMBL" id="BA000031">
    <property type="protein sequence ID" value="BAC58531.1"/>
    <property type="molecule type" value="Genomic_DNA"/>
</dbReference>
<dbReference type="RefSeq" id="NP_796647.1">
    <property type="nucleotide sequence ID" value="NC_004603.1"/>
</dbReference>
<dbReference type="RefSeq" id="WP_005455662.1">
    <property type="nucleotide sequence ID" value="NC_004603.1"/>
</dbReference>
<dbReference type="SMR" id="Q87T02"/>
<dbReference type="GeneID" id="1187735"/>
<dbReference type="KEGG" id="vpa:VP0268"/>
<dbReference type="PATRIC" id="fig|223926.6.peg.259"/>
<dbReference type="eggNOG" id="COG0198">
    <property type="taxonomic scope" value="Bacteria"/>
</dbReference>
<dbReference type="HOGENOM" id="CLU_093315_2_2_6"/>
<dbReference type="Proteomes" id="UP000002493">
    <property type="component" value="Chromosome 1"/>
</dbReference>
<dbReference type="GO" id="GO:1990904">
    <property type="term" value="C:ribonucleoprotein complex"/>
    <property type="evidence" value="ECO:0007669"/>
    <property type="project" value="UniProtKB-KW"/>
</dbReference>
<dbReference type="GO" id="GO:0005840">
    <property type="term" value="C:ribosome"/>
    <property type="evidence" value="ECO:0007669"/>
    <property type="project" value="UniProtKB-KW"/>
</dbReference>
<dbReference type="GO" id="GO:0019843">
    <property type="term" value="F:rRNA binding"/>
    <property type="evidence" value="ECO:0007669"/>
    <property type="project" value="UniProtKB-UniRule"/>
</dbReference>
<dbReference type="GO" id="GO:0003735">
    <property type="term" value="F:structural constituent of ribosome"/>
    <property type="evidence" value="ECO:0007669"/>
    <property type="project" value="InterPro"/>
</dbReference>
<dbReference type="GO" id="GO:0006412">
    <property type="term" value="P:translation"/>
    <property type="evidence" value="ECO:0007669"/>
    <property type="project" value="UniProtKB-UniRule"/>
</dbReference>
<dbReference type="CDD" id="cd06089">
    <property type="entry name" value="KOW_RPL26"/>
    <property type="match status" value="1"/>
</dbReference>
<dbReference type="FunFam" id="2.30.30.30:FF:000004">
    <property type="entry name" value="50S ribosomal protein L24"/>
    <property type="match status" value="1"/>
</dbReference>
<dbReference type="Gene3D" id="2.30.30.30">
    <property type="match status" value="1"/>
</dbReference>
<dbReference type="HAMAP" id="MF_01326_B">
    <property type="entry name" value="Ribosomal_uL24_B"/>
    <property type="match status" value="1"/>
</dbReference>
<dbReference type="InterPro" id="IPR005824">
    <property type="entry name" value="KOW"/>
</dbReference>
<dbReference type="InterPro" id="IPR014722">
    <property type="entry name" value="Rib_uL2_dom2"/>
</dbReference>
<dbReference type="InterPro" id="IPR003256">
    <property type="entry name" value="Ribosomal_uL24"/>
</dbReference>
<dbReference type="InterPro" id="IPR005825">
    <property type="entry name" value="Ribosomal_uL24_CS"/>
</dbReference>
<dbReference type="InterPro" id="IPR041988">
    <property type="entry name" value="Ribosomal_uL24_KOW"/>
</dbReference>
<dbReference type="InterPro" id="IPR008991">
    <property type="entry name" value="Translation_prot_SH3-like_sf"/>
</dbReference>
<dbReference type="NCBIfam" id="TIGR01079">
    <property type="entry name" value="rplX_bact"/>
    <property type="match status" value="1"/>
</dbReference>
<dbReference type="PANTHER" id="PTHR12903">
    <property type="entry name" value="MITOCHONDRIAL RIBOSOMAL PROTEIN L24"/>
    <property type="match status" value="1"/>
</dbReference>
<dbReference type="Pfam" id="PF00467">
    <property type="entry name" value="KOW"/>
    <property type="match status" value="1"/>
</dbReference>
<dbReference type="Pfam" id="PF17136">
    <property type="entry name" value="ribosomal_L24"/>
    <property type="match status" value="1"/>
</dbReference>
<dbReference type="SMART" id="SM00739">
    <property type="entry name" value="KOW"/>
    <property type="match status" value="1"/>
</dbReference>
<dbReference type="SUPFAM" id="SSF50104">
    <property type="entry name" value="Translation proteins SH3-like domain"/>
    <property type="match status" value="1"/>
</dbReference>
<dbReference type="PROSITE" id="PS01108">
    <property type="entry name" value="RIBOSOMAL_L24"/>
    <property type="match status" value="1"/>
</dbReference>
<evidence type="ECO:0000255" key="1">
    <source>
        <dbReference type="HAMAP-Rule" id="MF_01326"/>
    </source>
</evidence>
<evidence type="ECO:0000305" key="2"/>
<gene>
    <name evidence="1" type="primary">rplX</name>
    <name type="ordered locus">VP0268</name>
</gene>
<feature type="chain" id="PRO_0000130749" description="Large ribosomal subunit protein uL24">
    <location>
        <begin position="1"/>
        <end position="105"/>
    </location>
</feature>
<protein>
    <recommendedName>
        <fullName evidence="1">Large ribosomal subunit protein uL24</fullName>
    </recommendedName>
    <alternativeName>
        <fullName evidence="2">50S ribosomal protein L24</fullName>
    </alternativeName>
</protein>
<proteinExistence type="inferred from homology"/>
<reference key="1">
    <citation type="journal article" date="2003" name="Lancet">
        <title>Genome sequence of Vibrio parahaemolyticus: a pathogenic mechanism distinct from that of V. cholerae.</title>
        <authorList>
            <person name="Makino K."/>
            <person name="Oshima K."/>
            <person name="Kurokawa K."/>
            <person name="Yokoyama K."/>
            <person name="Uda T."/>
            <person name="Tagomori K."/>
            <person name="Iijima Y."/>
            <person name="Najima M."/>
            <person name="Nakano M."/>
            <person name="Yamashita A."/>
            <person name="Kubota Y."/>
            <person name="Kimura S."/>
            <person name="Yasunaga T."/>
            <person name="Honda T."/>
            <person name="Shinagawa H."/>
            <person name="Hattori M."/>
            <person name="Iida T."/>
        </authorList>
    </citation>
    <scope>NUCLEOTIDE SEQUENCE [LARGE SCALE GENOMIC DNA]</scope>
    <source>
        <strain>RIMD 2210633</strain>
    </source>
</reference>
<name>RL24_VIBPA</name>
<sequence>MAAKIRRNDEVIVLAGKDKGKKGKVTKVLATGKVIVEGINLVKKHQKPVPALGIQGGIVEQEAAIDVSNVAIFNAATGKADRIGFRFEDGKKVRFFKSNGETVSN</sequence>
<accession>Q87T02</accession>
<keyword id="KW-0687">Ribonucleoprotein</keyword>
<keyword id="KW-0689">Ribosomal protein</keyword>
<keyword id="KW-0694">RNA-binding</keyword>
<keyword id="KW-0699">rRNA-binding</keyword>
<comment type="function">
    <text evidence="1">One of two assembly initiator proteins, it binds directly to the 5'-end of the 23S rRNA, where it nucleates assembly of the 50S subunit.</text>
</comment>
<comment type="function">
    <text evidence="1">One of the proteins that surrounds the polypeptide exit tunnel on the outside of the subunit.</text>
</comment>
<comment type="subunit">
    <text evidence="1">Part of the 50S ribosomal subunit.</text>
</comment>
<comment type="similarity">
    <text evidence="1">Belongs to the universal ribosomal protein uL24 family.</text>
</comment>
<organism>
    <name type="scientific">Vibrio parahaemolyticus serotype O3:K6 (strain RIMD 2210633)</name>
    <dbReference type="NCBI Taxonomy" id="223926"/>
    <lineage>
        <taxon>Bacteria</taxon>
        <taxon>Pseudomonadati</taxon>
        <taxon>Pseudomonadota</taxon>
        <taxon>Gammaproteobacteria</taxon>
        <taxon>Vibrionales</taxon>
        <taxon>Vibrionaceae</taxon>
        <taxon>Vibrio</taxon>
    </lineage>
</organism>